<comment type="function">
    <text evidence="1">Alternative, nonproton pumping NADH:quinone oxidoreductase that delivers electrons to the respiratory chain by oxidation of NADH and reduction of quinones, and contributes to the regeneration of NAD(+).</text>
</comment>
<comment type="catalytic activity">
    <reaction evidence="1">
        <text>a quinone + NADH + H(+) = a quinol + NAD(+)</text>
        <dbReference type="Rhea" id="RHEA:46160"/>
        <dbReference type="ChEBI" id="CHEBI:15378"/>
        <dbReference type="ChEBI" id="CHEBI:24646"/>
        <dbReference type="ChEBI" id="CHEBI:57540"/>
        <dbReference type="ChEBI" id="CHEBI:57945"/>
        <dbReference type="ChEBI" id="CHEBI:132124"/>
        <dbReference type="EC" id="1.6.5.9"/>
    </reaction>
</comment>
<comment type="cofactor">
    <cofactor evidence="1">
        <name>FAD</name>
        <dbReference type="ChEBI" id="CHEBI:57692"/>
    </cofactor>
    <text evidence="1">Binds 1 FAD per subunit.</text>
</comment>
<comment type="subcellular location">
    <subcellularLocation>
        <location evidence="1">Cell membrane</location>
    </subcellularLocation>
</comment>
<comment type="similarity">
    <text evidence="2">Belongs to the NADH dehydrogenase family.</text>
</comment>
<organism>
    <name type="scientific">Staphylococcus epidermidis (strain ATCC 12228 / FDA PCI 1200)</name>
    <dbReference type="NCBI Taxonomy" id="176280"/>
    <lineage>
        <taxon>Bacteria</taxon>
        <taxon>Bacillati</taxon>
        <taxon>Bacillota</taxon>
        <taxon>Bacilli</taxon>
        <taxon>Bacillales</taxon>
        <taxon>Staphylococcaceae</taxon>
        <taxon>Staphylococcus</taxon>
    </lineage>
</organism>
<sequence>MAQDRKKVLVLGAGYAGLQTVTKLQKELSADAAEITLINKNEYHYESTWLHEASAGTINYEDLLYPVEKTVNKNKVNFVVAEVTKIDRNAKRVETDKGVYDFDILVVALGFVSETFGIDGMKEHAFQIENVLTSRKLSRHIEDKFANYAASKEKDDKDLSILVGGAGFTGIEFLGELTDRIPELCSKYGVDQSKVKLTCVEAAPKMLPMFSDDLVSYAVKYLEDRGVEFKIATPIVACNEKGFVVEVNGEKQQLEAGTSVWTAGVRGSHLMEESFEGVKRGRIINKQDLTIEGHNDIFVIGDCSAFIPADEERPLPTTAQIAMQQGEHTASNIKRLLNGESTQDFQYVNRGTVCSLGANDGVGIVYGRDIAGKKAAFLKKVIDTRAIYKLGGIGLAFKKGKF</sequence>
<keyword id="KW-1003">Cell membrane</keyword>
<keyword id="KW-0274">FAD</keyword>
<keyword id="KW-0285">Flavoprotein</keyword>
<keyword id="KW-0472">Membrane</keyword>
<keyword id="KW-0520">NAD</keyword>
<keyword id="KW-0560">Oxidoreductase</keyword>
<proteinExistence type="inferred from homology"/>
<name>NDH_STAES</name>
<evidence type="ECO:0000250" key="1">
    <source>
        <dbReference type="UniProtKB" id="Q2FZV7"/>
    </source>
</evidence>
<evidence type="ECO:0000305" key="2"/>
<reference key="1">
    <citation type="journal article" date="2003" name="Mol. Microbiol.">
        <title>Genome-based analysis of virulence genes in a non-biofilm-forming Staphylococcus epidermidis strain (ATCC 12228).</title>
        <authorList>
            <person name="Zhang Y.-Q."/>
            <person name="Ren S.-X."/>
            <person name="Li H.-L."/>
            <person name="Wang Y.-X."/>
            <person name="Fu G."/>
            <person name="Yang J."/>
            <person name="Qin Z.-Q."/>
            <person name="Miao Y.-G."/>
            <person name="Wang W.-Y."/>
            <person name="Chen R.-S."/>
            <person name="Shen Y."/>
            <person name="Chen Z."/>
            <person name="Yuan Z.-H."/>
            <person name="Zhao G.-P."/>
            <person name="Qu D."/>
            <person name="Danchin A."/>
            <person name="Wen Y.-M."/>
        </authorList>
    </citation>
    <scope>NUCLEOTIDE SEQUENCE [LARGE SCALE GENOMIC DNA]</scope>
    <source>
        <strain>ATCC 12228 / FDA PCI 1200</strain>
    </source>
</reference>
<accession>Q8CPV5</accession>
<dbReference type="EC" id="1.6.5.9" evidence="1"/>
<dbReference type="EMBL" id="AE015929">
    <property type="protein sequence ID" value="AAO04232.1"/>
    <property type="molecule type" value="Genomic_DNA"/>
</dbReference>
<dbReference type="RefSeq" id="NP_764190.1">
    <property type="nucleotide sequence ID" value="NC_004461.1"/>
</dbReference>
<dbReference type="RefSeq" id="WP_011082633.1">
    <property type="nucleotide sequence ID" value="NC_004461.1"/>
</dbReference>
<dbReference type="SMR" id="Q8CPV5"/>
<dbReference type="KEGG" id="sep:SE_0635"/>
<dbReference type="PATRIC" id="fig|176280.10.peg.608"/>
<dbReference type="eggNOG" id="COG1252">
    <property type="taxonomic scope" value="Bacteria"/>
</dbReference>
<dbReference type="HOGENOM" id="CLU_021377_7_2_9"/>
<dbReference type="OrthoDB" id="9781621at2"/>
<dbReference type="Proteomes" id="UP000001411">
    <property type="component" value="Chromosome"/>
</dbReference>
<dbReference type="GO" id="GO:0005886">
    <property type="term" value="C:plasma membrane"/>
    <property type="evidence" value="ECO:0007669"/>
    <property type="project" value="UniProtKB-SubCell"/>
</dbReference>
<dbReference type="GO" id="GO:0003955">
    <property type="term" value="F:NAD(P)H dehydrogenase (quinone) activity"/>
    <property type="evidence" value="ECO:0007669"/>
    <property type="project" value="TreeGrafter"/>
</dbReference>
<dbReference type="GO" id="GO:0050136">
    <property type="term" value="F:NADH:ubiquinone reductase (non-electrogenic) activity"/>
    <property type="evidence" value="ECO:0007669"/>
    <property type="project" value="UniProtKB-EC"/>
</dbReference>
<dbReference type="GO" id="GO:0019646">
    <property type="term" value="P:aerobic electron transport chain"/>
    <property type="evidence" value="ECO:0007669"/>
    <property type="project" value="TreeGrafter"/>
</dbReference>
<dbReference type="Gene3D" id="3.50.50.100">
    <property type="match status" value="1"/>
</dbReference>
<dbReference type="InterPro" id="IPR036188">
    <property type="entry name" value="FAD/NAD-bd_sf"/>
</dbReference>
<dbReference type="InterPro" id="IPR023753">
    <property type="entry name" value="FAD/NAD-binding_dom"/>
</dbReference>
<dbReference type="InterPro" id="IPR051169">
    <property type="entry name" value="NADH-Q_oxidoreductase"/>
</dbReference>
<dbReference type="PANTHER" id="PTHR42913:SF3">
    <property type="entry name" value="64 KDA MITOCHONDRIAL NADH DEHYDROGENASE (EUROFUNG)"/>
    <property type="match status" value="1"/>
</dbReference>
<dbReference type="PANTHER" id="PTHR42913">
    <property type="entry name" value="APOPTOSIS-INDUCING FACTOR 1"/>
    <property type="match status" value="1"/>
</dbReference>
<dbReference type="Pfam" id="PF07992">
    <property type="entry name" value="Pyr_redox_2"/>
    <property type="match status" value="1"/>
</dbReference>
<dbReference type="SUPFAM" id="SSF51905">
    <property type="entry name" value="FAD/NAD(P)-binding domain"/>
    <property type="match status" value="2"/>
</dbReference>
<feature type="chain" id="PRO_0000287373" description="Type II NADH:quinone oxidoreductase">
    <location>
        <begin position="1"/>
        <end position="402"/>
    </location>
</feature>
<feature type="active site" evidence="1">
    <location>
        <position position="172"/>
    </location>
</feature>
<feature type="binding site" evidence="1">
    <location>
        <begin position="12"/>
        <end position="16"/>
    </location>
    <ligand>
        <name>FAD</name>
        <dbReference type="ChEBI" id="CHEBI:57692"/>
    </ligand>
</feature>
<feature type="binding site" evidence="1">
    <location>
        <begin position="39"/>
        <end position="40"/>
    </location>
    <ligand>
        <name>FAD</name>
        <dbReference type="ChEBI" id="CHEBI:57692"/>
    </ligand>
</feature>
<feature type="binding site" evidence="1">
    <location>
        <position position="83"/>
    </location>
    <ligand>
        <name>FAD</name>
        <dbReference type="ChEBI" id="CHEBI:57692"/>
    </ligand>
</feature>
<feature type="binding site" evidence="1">
    <location>
        <position position="302"/>
    </location>
    <ligand>
        <name>FAD</name>
        <dbReference type="ChEBI" id="CHEBI:57692"/>
    </ligand>
</feature>
<feature type="binding site" evidence="1">
    <location>
        <begin position="319"/>
        <end position="320"/>
    </location>
    <ligand>
        <name>FAD</name>
        <dbReference type="ChEBI" id="CHEBI:57692"/>
    </ligand>
</feature>
<feature type="binding site" evidence="1">
    <location>
        <position position="379"/>
    </location>
    <ligand>
        <name>FAD</name>
        <dbReference type="ChEBI" id="CHEBI:57692"/>
    </ligand>
</feature>
<gene>
    <name type="ordered locus">SE_0635</name>
</gene>
<protein>
    <recommendedName>
        <fullName evidence="1">Type II NADH:quinone oxidoreductase</fullName>
        <ecNumber evidence="1">1.6.5.9</ecNumber>
    </recommendedName>
    <alternativeName>
        <fullName evidence="1">NDH-2</fullName>
    </alternativeName>
</protein>